<accession>P76084</accession>
<accession>Q2MBC9</accession>
<protein>
    <recommendedName>
        <fullName>Acyl-coenzyme A thioesterase PaaI</fullName>
        <ecNumber>3.1.2.-</ecNumber>
    </recommendedName>
    <alternativeName>
        <fullName>Phenylacetic acid degradation protein PaaI</fullName>
    </alternativeName>
</protein>
<feature type="initiator methionine" description="Removed" evidence="2">
    <location>
        <position position="1"/>
    </location>
</feature>
<feature type="chain" id="PRO_0000156675" description="Acyl-coenzyme A thioesterase PaaI">
    <location>
        <begin position="2"/>
        <end position="140"/>
    </location>
</feature>
<feature type="mutagenesis site" description="Reduces activity 1000-fold." evidence="2">
    <original>N</original>
    <variation>A</variation>
    <location>
        <position position="46"/>
    </location>
</feature>
<feature type="mutagenesis site" description="Reduces activity 100-fold." evidence="2">
    <original>H</original>
    <variation>A</variation>
    <location>
        <position position="52"/>
    </location>
</feature>
<feature type="mutagenesis site" description="Loss of activity." evidence="2">
    <original>D</original>
    <variation>A</variation>
    <location>
        <position position="61"/>
    </location>
</feature>
<feature type="helix" evidence="6">
    <location>
        <begin position="2"/>
        <end position="22"/>
    </location>
</feature>
<feature type="strand" evidence="6">
    <location>
        <begin position="25"/>
        <end position="30"/>
    </location>
</feature>
<feature type="strand" evidence="6">
    <location>
        <begin position="33"/>
        <end position="39"/>
    </location>
</feature>
<feature type="helix" evidence="6">
    <location>
        <begin position="42"/>
        <end position="44"/>
    </location>
</feature>
<feature type="strand" evidence="6">
    <location>
        <begin position="49"/>
        <end position="51"/>
    </location>
</feature>
<feature type="helix" evidence="6">
    <location>
        <begin position="53"/>
        <end position="69"/>
    </location>
</feature>
<feature type="turn" evidence="6">
    <location>
        <begin position="70"/>
        <end position="72"/>
    </location>
</feature>
<feature type="strand" evidence="6">
    <location>
        <begin position="76"/>
        <end position="84"/>
    </location>
</feature>
<feature type="strand" evidence="6">
    <location>
        <begin position="93"/>
        <end position="103"/>
    </location>
</feature>
<feature type="strand" evidence="6">
    <location>
        <begin position="105"/>
        <end position="115"/>
    </location>
</feature>
<feature type="strand" evidence="6">
    <location>
        <begin position="121"/>
        <end position="130"/>
    </location>
</feature>
<feature type="strand" evidence="5">
    <location>
        <begin position="133"/>
        <end position="135"/>
    </location>
</feature>
<evidence type="ECO:0000269" key="1">
    <source>
    </source>
</evidence>
<evidence type="ECO:0000269" key="2">
    <source>
    </source>
</evidence>
<evidence type="ECO:0000269" key="3">
    <source>
    </source>
</evidence>
<evidence type="ECO:0000305" key="4"/>
<evidence type="ECO:0007829" key="5">
    <source>
        <dbReference type="PDB" id="1PSU"/>
    </source>
</evidence>
<evidence type="ECO:0007829" key="6">
    <source>
        <dbReference type="PDB" id="2FS2"/>
    </source>
</evidence>
<comment type="function">
    <text evidence="2 3">Thioesterase with a preference for ring-hydroxylated phenylacetyl-CoA esters. Hydrolyzes 3,4-dihydroxyphenylacetyl-CoA, 3-hydroxyphenylacetyl-CoA and 4-hydroxyphenylacetyl-CoA. Inactive towards 4-hydroxybenzoyl-CoA and 4-hydroxyphenacyl-CoA.</text>
</comment>
<comment type="biophysicochemical properties">
    <kinetics>
        <KM>16 uM for 3,4-dihydroxyphenylacetyl-CoA</KM>
        <KM>21 uM for 3-hydroxyphenylacetyl-CoA</KM>
        <KM>35 uM for 4-hydroxyphenylacetyl-CoA</KM>
    </kinetics>
    <phDependence>
        <text>Optimum pH is 7.5-9.</text>
    </phDependence>
</comment>
<comment type="pathway">
    <text>Aromatic compound metabolism; phenylacetate degradation.</text>
</comment>
<comment type="subunit">
    <text evidence="2">Homotetramer.</text>
</comment>
<comment type="induction">
    <text evidence="1 3">Activated by cAMP receptor protein (CRP), integration host factor (IHF) and by phenylacetyl-coenzyme A (PA-CoA) that prevents PaaX from binding its target sequences. Inhibited by PaaX.</text>
</comment>
<comment type="mass spectrometry" mass="14720.0" method="Electrospray" evidence="2"/>
<comment type="similarity">
    <text evidence="4">Belongs to the thioesterase PaaI family.</text>
</comment>
<dbReference type="EC" id="3.1.2.-"/>
<dbReference type="EMBL" id="X97452">
    <property type="protein sequence ID" value="CAA66098.1"/>
    <property type="molecule type" value="Genomic_DNA"/>
</dbReference>
<dbReference type="EMBL" id="U00096">
    <property type="protein sequence ID" value="AAC74478.1"/>
    <property type="molecule type" value="Genomic_DNA"/>
</dbReference>
<dbReference type="EMBL" id="AP009048">
    <property type="protein sequence ID" value="BAE76427.1"/>
    <property type="molecule type" value="Genomic_DNA"/>
</dbReference>
<dbReference type="PIR" id="G64890">
    <property type="entry name" value="G64890"/>
</dbReference>
<dbReference type="RefSeq" id="NP_415914.1">
    <property type="nucleotide sequence ID" value="NC_000913.3"/>
</dbReference>
<dbReference type="RefSeq" id="WP_000018413.1">
    <property type="nucleotide sequence ID" value="NZ_STEB01000005.1"/>
</dbReference>
<dbReference type="PDB" id="1PSU">
    <property type="method" value="X-ray"/>
    <property type="resolution" value="2.20 A"/>
    <property type="chains" value="A/B=1-140"/>
</dbReference>
<dbReference type="PDB" id="2FS2">
    <property type="method" value="X-ray"/>
    <property type="resolution" value="2.00 A"/>
    <property type="chains" value="A/B=2-140"/>
</dbReference>
<dbReference type="PDBsum" id="1PSU"/>
<dbReference type="PDBsum" id="2FS2"/>
<dbReference type="SMR" id="P76084"/>
<dbReference type="BioGRID" id="4261735">
    <property type="interactions" value="621"/>
</dbReference>
<dbReference type="DIP" id="DIP-10428N"/>
<dbReference type="FunCoup" id="P76084">
    <property type="interactions" value="147"/>
</dbReference>
<dbReference type="IntAct" id="P76084">
    <property type="interactions" value="2"/>
</dbReference>
<dbReference type="STRING" id="511145.b1396"/>
<dbReference type="PaxDb" id="511145-b1396"/>
<dbReference type="DNASU" id="945265"/>
<dbReference type="EnsemblBacteria" id="AAC74478">
    <property type="protein sequence ID" value="AAC74478"/>
    <property type="gene ID" value="b1396"/>
</dbReference>
<dbReference type="GeneID" id="75057358"/>
<dbReference type="GeneID" id="945265"/>
<dbReference type="KEGG" id="ecj:JW1391"/>
<dbReference type="KEGG" id="eco:b1396"/>
<dbReference type="KEGG" id="ecoc:C3026_08145"/>
<dbReference type="PATRIC" id="fig|1411691.4.peg.875"/>
<dbReference type="EchoBASE" id="EB3506"/>
<dbReference type="eggNOG" id="COG2050">
    <property type="taxonomic scope" value="Bacteria"/>
</dbReference>
<dbReference type="HOGENOM" id="CLU_089876_11_0_6"/>
<dbReference type="InParanoid" id="P76084"/>
<dbReference type="OMA" id="FACNSHN"/>
<dbReference type="OrthoDB" id="32575at2"/>
<dbReference type="PhylomeDB" id="P76084"/>
<dbReference type="BioCyc" id="EcoCyc:G6717-MONOMER"/>
<dbReference type="BioCyc" id="MetaCyc:G6717-MONOMER"/>
<dbReference type="BRENDA" id="3.1.2.B5">
    <property type="organism ID" value="2026"/>
</dbReference>
<dbReference type="UniPathway" id="UPA00930"/>
<dbReference type="EvolutionaryTrace" id="P76084"/>
<dbReference type="PRO" id="PR:P76084"/>
<dbReference type="Proteomes" id="UP000000625">
    <property type="component" value="Chromosome"/>
</dbReference>
<dbReference type="GO" id="GO:0016289">
    <property type="term" value="F:acyl-CoA hydrolase activity"/>
    <property type="evidence" value="ECO:0000314"/>
    <property type="project" value="EcoCyc"/>
</dbReference>
<dbReference type="GO" id="GO:0010124">
    <property type="term" value="P:phenylacetate catabolic process"/>
    <property type="evidence" value="ECO:0007669"/>
    <property type="project" value="UniProtKB-UniPathway"/>
</dbReference>
<dbReference type="CDD" id="cd03443">
    <property type="entry name" value="PaaI_thioesterase"/>
    <property type="match status" value="1"/>
</dbReference>
<dbReference type="FunFam" id="3.10.129.10:FF:000022">
    <property type="entry name" value="Phenylacetic acid degradation protein"/>
    <property type="match status" value="1"/>
</dbReference>
<dbReference type="Gene3D" id="3.10.129.10">
    <property type="entry name" value="Hotdog Thioesterase"/>
    <property type="match status" value="1"/>
</dbReference>
<dbReference type="InterPro" id="IPR052723">
    <property type="entry name" value="Acyl-CoA_thioesterase_PaaI"/>
</dbReference>
<dbReference type="InterPro" id="IPR029069">
    <property type="entry name" value="HotDog_dom_sf"/>
</dbReference>
<dbReference type="InterPro" id="IPR011973">
    <property type="entry name" value="PaaD"/>
</dbReference>
<dbReference type="InterPro" id="IPR003736">
    <property type="entry name" value="PAAI_dom"/>
</dbReference>
<dbReference type="InterPro" id="IPR006683">
    <property type="entry name" value="Thioestr_dom"/>
</dbReference>
<dbReference type="NCBIfam" id="TIGR02286">
    <property type="entry name" value="PaaD"/>
    <property type="match status" value="1"/>
</dbReference>
<dbReference type="NCBIfam" id="TIGR00369">
    <property type="entry name" value="unchar_dom_1"/>
    <property type="match status" value="1"/>
</dbReference>
<dbReference type="PANTHER" id="PTHR42856">
    <property type="entry name" value="ACYL-COENZYME A THIOESTERASE PAAI"/>
    <property type="match status" value="1"/>
</dbReference>
<dbReference type="PANTHER" id="PTHR42856:SF1">
    <property type="entry name" value="ACYL-COENZYME A THIOESTERASE PAAI"/>
    <property type="match status" value="1"/>
</dbReference>
<dbReference type="Pfam" id="PF03061">
    <property type="entry name" value="4HBT"/>
    <property type="match status" value="1"/>
</dbReference>
<dbReference type="SUPFAM" id="SSF54637">
    <property type="entry name" value="Thioesterase/thiol ester dehydrase-isomerase"/>
    <property type="match status" value="1"/>
</dbReference>
<gene>
    <name type="primary">paaI</name>
    <name type="synonym">ydbV</name>
    <name type="ordered locus">b1396</name>
    <name type="ordered locus">JW1391</name>
</gene>
<sequence length="140" mass="14851">MSHKAWQNAHAMYENDACAKALGIDIISMDEGFAVVTMTVTAQMLNGHQSCHGGQLFSLADTAFAYACNSQGLAAVASACTIDFLRPGFAGDTLTATAQVRHQGKQTGVYDIEIVNQQQKTVALFRGKSHRIGGTITGEA</sequence>
<keyword id="KW-0002">3D-structure</keyword>
<keyword id="KW-0378">Hydrolase</keyword>
<keyword id="KW-1185">Reference proteome</keyword>
<name>PAAI_ECOLI</name>
<proteinExistence type="evidence at protein level"/>
<organism>
    <name type="scientific">Escherichia coli (strain K12)</name>
    <dbReference type="NCBI Taxonomy" id="83333"/>
    <lineage>
        <taxon>Bacteria</taxon>
        <taxon>Pseudomonadati</taxon>
        <taxon>Pseudomonadota</taxon>
        <taxon>Gammaproteobacteria</taxon>
        <taxon>Enterobacterales</taxon>
        <taxon>Enterobacteriaceae</taxon>
        <taxon>Escherichia</taxon>
    </lineage>
</organism>
<reference key="1">
    <citation type="journal article" date="1998" name="J. Biol. Chem.">
        <title>Catabolism of phenylacetic acid in Escherichia coli. Characterization of a new aerobic hybrid pathway.</title>
        <authorList>
            <person name="Ferrandez A."/>
            <person name="Minambres B."/>
            <person name="Garcia B."/>
            <person name="Olivera E.R."/>
            <person name="Luengo J.M."/>
            <person name="Garcia J.L."/>
            <person name="Diaz E."/>
        </authorList>
    </citation>
    <scope>NUCLEOTIDE SEQUENCE [GENOMIC DNA]</scope>
    <scope>FUNCTION IN PHENYLACETATE CATABOLISM</scope>
    <scope>INDUCTION</scope>
    <source>
        <strain>W / ATCC 11105 / DSM 1900</strain>
    </source>
</reference>
<reference key="2">
    <citation type="journal article" date="1997" name="Science">
        <title>The complete genome sequence of Escherichia coli K-12.</title>
        <authorList>
            <person name="Blattner F.R."/>
            <person name="Plunkett G. III"/>
            <person name="Bloch C.A."/>
            <person name="Perna N.T."/>
            <person name="Burland V."/>
            <person name="Riley M."/>
            <person name="Collado-Vides J."/>
            <person name="Glasner J.D."/>
            <person name="Rode C.K."/>
            <person name="Mayhew G.F."/>
            <person name="Gregor J."/>
            <person name="Davis N.W."/>
            <person name="Kirkpatrick H.A."/>
            <person name="Goeden M.A."/>
            <person name="Rose D.J."/>
            <person name="Mau B."/>
            <person name="Shao Y."/>
        </authorList>
    </citation>
    <scope>NUCLEOTIDE SEQUENCE [LARGE SCALE GENOMIC DNA]</scope>
    <source>
        <strain>K12 / MG1655 / ATCC 47076</strain>
    </source>
</reference>
<reference key="3">
    <citation type="journal article" date="2006" name="Mol. Syst. Biol.">
        <title>Highly accurate genome sequences of Escherichia coli K-12 strains MG1655 and W3110.</title>
        <authorList>
            <person name="Hayashi K."/>
            <person name="Morooka N."/>
            <person name="Yamamoto Y."/>
            <person name="Fujita K."/>
            <person name="Isono K."/>
            <person name="Choi S."/>
            <person name="Ohtsubo E."/>
            <person name="Baba T."/>
            <person name="Wanner B.L."/>
            <person name="Mori H."/>
            <person name="Horiuchi T."/>
        </authorList>
    </citation>
    <scope>NUCLEOTIDE SEQUENCE [LARGE SCALE GENOMIC DNA]</scope>
    <source>
        <strain>K12 / W3110 / ATCC 27325 / DSM 5911</strain>
    </source>
</reference>
<reference key="4">
    <citation type="journal article" date="2000" name="J. Biol. Chem.">
        <title>Transcriptional regulation of the divergent paa catabolic operons for phenylacetic acid degradation in Escherichia coli.</title>
        <authorList>
            <person name="Ferrandez A."/>
            <person name="Garcia J.L."/>
            <person name="Diaz E."/>
        </authorList>
    </citation>
    <scope>TRANSCRIPTIONAL REGULATION</scope>
</reference>
<reference key="5">
    <citation type="journal article" date="2006" name="J. Biol. Chem.">
        <title>Structure, function, and mechanism of the phenylacetate pathway hot dog-fold thioesterase PaaI.</title>
        <authorList>
            <person name="Song F."/>
            <person name="Zhuang Z."/>
            <person name="Finci L."/>
            <person name="Dunaway-Mariano D."/>
            <person name="Kniewel R."/>
            <person name="Buglino J.A."/>
            <person name="Solorzano V."/>
            <person name="Wu J."/>
            <person name="Lima C.D."/>
        </authorList>
    </citation>
    <scope>X-RAY CRYSTALLOGRAPHY (2.0 ANGSTROMS) OF 2-140</scope>
    <scope>MASS SPECTROMETRY</scope>
    <scope>CLEAVAGE OF INITIATOR METHIONINE</scope>
    <scope>FUNCTION</scope>
    <scope>MUTAGENESIS OF ASN-46; HIS-52 AND ASP-61</scope>
    <scope>SUBUNIT</scope>
</reference>
<reference key="6">
    <citation type="submission" date="2009-02" db="PDB data bank">
        <title>Structure of the E. coli paaI protein from the phyenylacetic acid degradation operon.</title>
        <authorList>
            <consortium name="New York structural genomix research consortium (NYSGXRC)"/>
        </authorList>
    </citation>
    <scope>X-RAY CRYSTALLOGRAPHY (2.2 ANGSTROMS)</scope>
</reference>